<keyword id="KW-0067">ATP-binding</keyword>
<keyword id="KW-0963">Cytoplasm</keyword>
<keyword id="KW-0418">Kinase</keyword>
<keyword id="KW-0496">Mitochondrion</keyword>
<keyword id="KW-0547">Nucleotide-binding</keyword>
<keyword id="KW-1185">Reference proteome</keyword>
<keyword id="KW-0808">Transferase</keyword>
<evidence type="ECO:0000255" key="1">
    <source>
        <dbReference type="HAMAP-Rule" id="MF_03168"/>
    </source>
</evidence>
<evidence type="ECO:0000256" key="2">
    <source>
        <dbReference type="SAM" id="MobiDB-lite"/>
    </source>
</evidence>
<sequence>MSDDLKQVVNQLQDRITQLEKKAGIVPNVPKSIRMVLIGPPGAGKGTQAPNLKEKFCACHLATGDMLRAQVTAKTELGVQAKKIMDQGGLVSDEIMVNMIKSELENNKECSQGFILDGFPRTIPQAEKLDSMLEDRKTPLQKAVELKIEDQLLVDRITGRLVHPASGRSYHKLFNPPKKEMTDDQTGEPLVQRSDDNEEALKKRLGTYHKQTEPIVEYYKKSGIWSGIDASQKPSKVWTDILKCLGQ</sequence>
<accession>A5DC72</accession>
<reference key="1">
    <citation type="journal article" date="2009" name="Nature">
        <title>Evolution of pathogenicity and sexual reproduction in eight Candida genomes.</title>
        <authorList>
            <person name="Butler G."/>
            <person name="Rasmussen M.D."/>
            <person name="Lin M.F."/>
            <person name="Santos M.A.S."/>
            <person name="Sakthikumar S."/>
            <person name="Munro C.A."/>
            <person name="Rheinbay E."/>
            <person name="Grabherr M."/>
            <person name="Forche A."/>
            <person name="Reedy J.L."/>
            <person name="Agrafioti I."/>
            <person name="Arnaud M.B."/>
            <person name="Bates S."/>
            <person name="Brown A.J.P."/>
            <person name="Brunke S."/>
            <person name="Costanzo M.C."/>
            <person name="Fitzpatrick D.A."/>
            <person name="de Groot P.W.J."/>
            <person name="Harris D."/>
            <person name="Hoyer L.L."/>
            <person name="Hube B."/>
            <person name="Klis F.M."/>
            <person name="Kodira C."/>
            <person name="Lennard N."/>
            <person name="Logue M.E."/>
            <person name="Martin R."/>
            <person name="Neiman A.M."/>
            <person name="Nikolaou E."/>
            <person name="Quail M.A."/>
            <person name="Quinn J."/>
            <person name="Santos M.C."/>
            <person name="Schmitzberger F.F."/>
            <person name="Sherlock G."/>
            <person name="Shah P."/>
            <person name="Silverstein K.A.T."/>
            <person name="Skrzypek M.S."/>
            <person name="Soll D."/>
            <person name="Staggs R."/>
            <person name="Stansfield I."/>
            <person name="Stumpf M.P.H."/>
            <person name="Sudbery P.E."/>
            <person name="Srikantha T."/>
            <person name="Zeng Q."/>
            <person name="Berman J."/>
            <person name="Berriman M."/>
            <person name="Heitman J."/>
            <person name="Gow N.A.R."/>
            <person name="Lorenz M.C."/>
            <person name="Birren B.W."/>
            <person name="Kellis M."/>
            <person name="Cuomo C.A."/>
        </authorList>
    </citation>
    <scope>NUCLEOTIDE SEQUENCE [LARGE SCALE GENOMIC DNA]</scope>
    <source>
        <strain>ATCC 6260 / CBS 566 / DSM 6381 / JCM 1539 / NBRC 10279 / NRRL Y-324</strain>
    </source>
</reference>
<gene>
    <name evidence="1" type="primary">ADK1</name>
    <name type="ORF">PGUG_00877</name>
</gene>
<proteinExistence type="inferred from homology"/>
<protein>
    <recommendedName>
        <fullName evidence="1">Adenylate kinase</fullName>
        <ecNumber evidence="1">2.7.4.3</ecNumber>
    </recommendedName>
    <alternativeName>
        <fullName evidence="1">ATP-AMP transphosphorylase</fullName>
    </alternativeName>
    <alternativeName>
        <fullName evidence="1">ATP:AMP phosphotransferase</fullName>
    </alternativeName>
    <alternativeName>
        <fullName evidence="1">Adenylate kinase cytosolic and mitochondrial</fullName>
    </alternativeName>
    <alternativeName>
        <fullName evidence="1">Adenylate monophosphate kinase</fullName>
    </alternativeName>
</protein>
<dbReference type="EC" id="2.7.4.3" evidence="1"/>
<dbReference type="EMBL" id="CH408155">
    <property type="protein sequence ID" value="EDK36779.1"/>
    <property type="molecule type" value="Genomic_DNA"/>
</dbReference>
<dbReference type="RefSeq" id="XP_001487500.1">
    <property type="nucleotide sequence ID" value="XM_001487450.1"/>
</dbReference>
<dbReference type="SMR" id="A5DC72"/>
<dbReference type="FunCoup" id="A5DC72">
    <property type="interactions" value="820"/>
</dbReference>
<dbReference type="STRING" id="294746.A5DC72"/>
<dbReference type="GeneID" id="5128645"/>
<dbReference type="KEGG" id="pgu:PGUG_00877"/>
<dbReference type="VEuPathDB" id="FungiDB:PGUG_00877"/>
<dbReference type="eggNOG" id="KOG3078">
    <property type="taxonomic scope" value="Eukaryota"/>
</dbReference>
<dbReference type="HOGENOM" id="CLU_032354_1_0_1"/>
<dbReference type="InParanoid" id="A5DC72"/>
<dbReference type="OMA" id="VYHEQTA"/>
<dbReference type="OrthoDB" id="439792at2759"/>
<dbReference type="Proteomes" id="UP000001997">
    <property type="component" value="Unassembled WGS sequence"/>
</dbReference>
<dbReference type="GO" id="GO:0005829">
    <property type="term" value="C:cytosol"/>
    <property type="evidence" value="ECO:0007669"/>
    <property type="project" value="UniProtKB-SubCell"/>
</dbReference>
<dbReference type="GO" id="GO:0005758">
    <property type="term" value="C:mitochondrial intermembrane space"/>
    <property type="evidence" value="ECO:0007669"/>
    <property type="project" value="UniProtKB-SubCell"/>
</dbReference>
<dbReference type="GO" id="GO:0004017">
    <property type="term" value="F:adenylate kinase activity"/>
    <property type="evidence" value="ECO:0007669"/>
    <property type="project" value="UniProtKB-UniRule"/>
</dbReference>
<dbReference type="GO" id="GO:0016208">
    <property type="term" value="F:AMP binding"/>
    <property type="evidence" value="ECO:0007669"/>
    <property type="project" value="EnsemblFungi"/>
</dbReference>
<dbReference type="GO" id="GO:0005524">
    <property type="term" value="F:ATP binding"/>
    <property type="evidence" value="ECO:0007669"/>
    <property type="project" value="UniProtKB-KW"/>
</dbReference>
<dbReference type="GO" id="GO:0003688">
    <property type="term" value="F:DNA replication origin binding"/>
    <property type="evidence" value="ECO:0007669"/>
    <property type="project" value="EnsemblFungi"/>
</dbReference>
<dbReference type="GO" id="GO:0006172">
    <property type="term" value="P:ADP biosynthetic process"/>
    <property type="evidence" value="ECO:0007669"/>
    <property type="project" value="UniProtKB-UniRule"/>
</dbReference>
<dbReference type="GO" id="GO:0046033">
    <property type="term" value="P:AMP metabolic process"/>
    <property type="evidence" value="ECO:0007669"/>
    <property type="project" value="UniProtKB-UniRule"/>
</dbReference>
<dbReference type="GO" id="GO:0046034">
    <property type="term" value="P:ATP metabolic process"/>
    <property type="evidence" value="ECO:0007669"/>
    <property type="project" value="UniProtKB-UniRule"/>
</dbReference>
<dbReference type="GO" id="GO:0006270">
    <property type="term" value="P:DNA replication initiation"/>
    <property type="evidence" value="ECO:0007669"/>
    <property type="project" value="EnsemblFungi"/>
</dbReference>
<dbReference type="GO" id="GO:0036388">
    <property type="term" value="P:pre-replicative complex assembly"/>
    <property type="evidence" value="ECO:0007669"/>
    <property type="project" value="EnsemblFungi"/>
</dbReference>
<dbReference type="CDD" id="cd01428">
    <property type="entry name" value="ADK"/>
    <property type="match status" value="1"/>
</dbReference>
<dbReference type="FunFam" id="3.40.50.300:FF:000106">
    <property type="entry name" value="Adenylate kinase mitochondrial"/>
    <property type="match status" value="1"/>
</dbReference>
<dbReference type="Gene3D" id="3.40.50.300">
    <property type="entry name" value="P-loop containing nucleotide triphosphate hydrolases"/>
    <property type="match status" value="1"/>
</dbReference>
<dbReference type="HAMAP" id="MF_00235">
    <property type="entry name" value="Adenylate_kinase_Adk"/>
    <property type="match status" value="1"/>
</dbReference>
<dbReference type="HAMAP" id="MF_03168">
    <property type="entry name" value="Adenylate_kinase_AK2"/>
    <property type="match status" value="1"/>
</dbReference>
<dbReference type="InterPro" id="IPR006259">
    <property type="entry name" value="Adenyl_kin_sub"/>
</dbReference>
<dbReference type="InterPro" id="IPR000850">
    <property type="entry name" value="Adenylat/UMP-CMP_kin"/>
</dbReference>
<dbReference type="InterPro" id="IPR033690">
    <property type="entry name" value="Adenylat_kinase_CS"/>
</dbReference>
<dbReference type="InterPro" id="IPR007862">
    <property type="entry name" value="Adenylate_kinase_lid-dom"/>
</dbReference>
<dbReference type="InterPro" id="IPR028587">
    <property type="entry name" value="AK2"/>
</dbReference>
<dbReference type="InterPro" id="IPR027417">
    <property type="entry name" value="P-loop_NTPase"/>
</dbReference>
<dbReference type="NCBIfam" id="TIGR01351">
    <property type="entry name" value="adk"/>
    <property type="match status" value="1"/>
</dbReference>
<dbReference type="NCBIfam" id="NF001380">
    <property type="entry name" value="PRK00279.1-2"/>
    <property type="match status" value="1"/>
</dbReference>
<dbReference type="NCBIfam" id="NF001381">
    <property type="entry name" value="PRK00279.1-3"/>
    <property type="match status" value="1"/>
</dbReference>
<dbReference type="NCBIfam" id="NF011100">
    <property type="entry name" value="PRK14527.1"/>
    <property type="match status" value="1"/>
</dbReference>
<dbReference type="PANTHER" id="PTHR23359">
    <property type="entry name" value="NUCLEOTIDE KINASE"/>
    <property type="match status" value="1"/>
</dbReference>
<dbReference type="Pfam" id="PF00406">
    <property type="entry name" value="ADK"/>
    <property type="match status" value="1"/>
</dbReference>
<dbReference type="Pfam" id="PF05191">
    <property type="entry name" value="ADK_lid"/>
    <property type="match status" value="1"/>
</dbReference>
<dbReference type="PRINTS" id="PR00094">
    <property type="entry name" value="ADENYLTKNASE"/>
</dbReference>
<dbReference type="SUPFAM" id="SSF52540">
    <property type="entry name" value="P-loop containing nucleoside triphosphate hydrolases"/>
    <property type="match status" value="1"/>
</dbReference>
<dbReference type="PROSITE" id="PS00113">
    <property type="entry name" value="ADENYLATE_KINASE"/>
    <property type="match status" value="1"/>
</dbReference>
<feature type="chain" id="PRO_0000365683" description="Adenylate kinase">
    <location>
        <begin position="1"/>
        <end position="247"/>
    </location>
</feature>
<feature type="region of interest" description="NMP" evidence="1">
    <location>
        <begin position="62"/>
        <end position="91"/>
    </location>
</feature>
<feature type="region of interest" description="LID" evidence="1">
    <location>
        <begin position="159"/>
        <end position="196"/>
    </location>
</feature>
<feature type="region of interest" description="Disordered" evidence="2">
    <location>
        <begin position="169"/>
        <end position="191"/>
    </location>
</feature>
<feature type="binding site" evidence="1">
    <location>
        <begin position="42"/>
        <end position="47"/>
    </location>
    <ligand>
        <name>ATP</name>
        <dbReference type="ChEBI" id="CHEBI:30616"/>
    </ligand>
</feature>
<feature type="binding site" evidence="1">
    <location>
        <position position="63"/>
    </location>
    <ligand>
        <name>AMP</name>
        <dbReference type="ChEBI" id="CHEBI:456215"/>
    </ligand>
</feature>
<feature type="binding site" evidence="1">
    <location>
        <position position="68"/>
    </location>
    <ligand>
        <name>AMP</name>
        <dbReference type="ChEBI" id="CHEBI:456215"/>
    </ligand>
</feature>
<feature type="binding site" evidence="1">
    <location>
        <begin position="89"/>
        <end position="91"/>
    </location>
    <ligand>
        <name>AMP</name>
        <dbReference type="ChEBI" id="CHEBI:456215"/>
    </ligand>
</feature>
<feature type="binding site" evidence="1">
    <location>
        <begin position="118"/>
        <end position="121"/>
    </location>
    <ligand>
        <name>AMP</name>
        <dbReference type="ChEBI" id="CHEBI:456215"/>
    </ligand>
</feature>
<feature type="binding site" evidence="1">
    <location>
        <position position="125"/>
    </location>
    <ligand>
        <name>AMP</name>
        <dbReference type="ChEBI" id="CHEBI:456215"/>
    </ligand>
</feature>
<feature type="binding site" evidence="1">
    <location>
        <position position="160"/>
    </location>
    <ligand>
        <name>ATP</name>
        <dbReference type="ChEBI" id="CHEBI:30616"/>
    </ligand>
</feature>
<feature type="binding site" evidence="1">
    <location>
        <begin position="169"/>
        <end position="170"/>
    </location>
    <ligand>
        <name>ATP</name>
        <dbReference type="ChEBI" id="CHEBI:30616"/>
    </ligand>
</feature>
<feature type="binding site" evidence="1">
    <location>
        <position position="193"/>
    </location>
    <ligand>
        <name>AMP</name>
        <dbReference type="ChEBI" id="CHEBI:456215"/>
    </ligand>
</feature>
<feature type="binding site" evidence="1">
    <location>
        <position position="204"/>
    </location>
    <ligand>
        <name>AMP</name>
        <dbReference type="ChEBI" id="CHEBI:456215"/>
    </ligand>
</feature>
<feature type="binding site" evidence="1">
    <location>
        <position position="232"/>
    </location>
    <ligand>
        <name>ATP</name>
        <dbReference type="ChEBI" id="CHEBI:30616"/>
    </ligand>
</feature>
<name>KAD2_PICGU</name>
<organism>
    <name type="scientific">Meyerozyma guilliermondii (strain ATCC 6260 / CBS 566 / DSM 6381 / JCM 1539 / NBRC 10279 / NRRL Y-324)</name>
    <name type="common">Yeast</name>
    <name type="synonym">Candida guilliermondii</name>
    <dbReference type="NCBI Taxonomy" id="294746"/>
    <lineage>
        <taxon>Eukaryota</taxon>
        <taxon>Fungi</taxon>
        <taxon>Dikarya</taxon>
        <taxon>Ascomycota</taxon>
        <taxon>Saccharomycotina</taxon>
        <taxon>Pichiomycetes</taxon>
        <taxon>Debaryomycetaceae</taxon>
        <taxon>Meyerozyma</taxon>
    </lineage>
</organism>
<comment type="function">
    <text evidence="1">Catalyzes the reversible transfer of the terminal phosphate group between ATP and AMP. Plays an important role in cellular energy homeostasis and in adenine nucleotide metabolism. Adenylate kinase activity is critical for regulation of the phosphate utilization and the AMP de novo biosynthesis pathways.</text>
</comment>
<comment type="catalytic activity">
    <reaction evidence="1">
        <text>AMP + ATP = 2 ADP</text>
        <dbReference type="Rhea" id="RHEA:12973"/>
        <dbReference type="ChEBI" id="CHEBI:30616"/>
        <dbReference type="ChEBI" id="CHEBI:456215"/>
        <dbReference type="ChEBI" id="CHEBI:456216"/>
        <dbReference type="EC" id="2.7.4.3"/>
    </reaction>
</comment>
<comment type="subunit">
    <text evidence="1">Monomer.</text>
</comment>
<comment type="subcellular location">
    <subcellularLocation>
        <location evidence="1">Cytoplasm</location>
        <location evidence="1">Cytosol</location>
    </subcellularLocation>
    <subcellularLocation>
        <location evidence="1">Mitochondrion intermembrane space</location>
    </subcellularLocation>
    <text evidence="1">Predominantly mitochondrial.</text>
</comment>
<comment type="domain">
    <text evidence="1">Consists of three domains, a large central CORE domain and two small peripheral domains, NMPbind and LID, which undergo movements during catalysis. The LID domain closes over the site of phosphoryl transfer upon ATP binding. Assembling and dissambling the active center during each catalytic cycle provides an effective means to prevent ATP hydrolysis.</text>
</comment>
<comment type="similarity">
    <text evidence="1">Belongs to the adenylate kinase family. AK2 subfamily.</text>
</comment>